<accession>B2T738</accession>
<evidence type="ECO:0000255" key="1">
    <source>
        <dbReference type="HAMAP-Rule" id="MF_00537"/>
    </source>
</evidence>
<evidence type="ECO:0000305" key="2"/>
<dbReference type="EMBL" id="CP001052">
    <property type="protein sequence ID" value="ACD18021.1"/>
    <property type="molecule type" value="Genomic_DNA"/>
</dbReference>
<dbReference type="RefSeq" id="WP_006052215.1">
    <property type="nucleotide sequence ID" value="NC_010681.1"/>
</dbReference>
<dbReference type="SMR" id="B2T738"/>
<dbReference type="STRING" id="398527.Bphyt_3631"/>
<dbReference type="GeneID" id="97311005"/>
<dbReference type="KEGG" id="bpy:Bphyt_3631"/>
<dbReference type="eggNOG" id="COG0199">
    <property type="taxonomic scope" value="Bacteria"/>
</dbReference>
<dbReference type="HOGENOM" id="CLU_139869_0_1_4"/>
<dbReference type="OrthoDB" id="9810484at2"/>
<dbReference type="Proteomes" id="UP000001739">
    <property type="component" value="Chromosome 1"/>
</dbReference>
<dbReference type="GO" id="GO:0005737">
    <property type="term" value="C:cytoplasm"/>
    <property type="evidence" value="ECO:0007669"/>
    <property type="project" value="UniProtKB-ARBA"/>
</dbReference>
<dbReference type="GO" id="GO:0015935">
    <property type="term" value="C:small ribosomal subunit"/>
    <property type="evidence" value="ECO:0007669"/>
    <property type="project" value="TreeGrafter"/>
</dbReference>
<dbReference type="GO" id="GO:0019843">
    <property type="term" value="F:rRNA binding"/>
    <property type="evidence" value="ECO:0007669"/>
    <property type="project" value="UniProtKB-UniRule"/>
</dbReference>
<dbReference type="GO" id="GO:0003735">
    <property type="term" value="F:structural constituent of ribosome"/>
    <property type="evidence" value="ECO:0007669"/>
    <property type="project" value="InterPro"/>
</dbReference>
<dbReference type="GO" id="GO:0006412">
    <property type="term" value="P:translation"/>
    <property type="evidence" value="ECO:0007669"/>
    <property type="project" value="UniProtKB-UniRule"/>
</dbReference>
<dbReference type="FunFam" id="1.10.287.1480:FF:000001">
    <property type="entry name" value="30S ribosomal protein S14"/>
    <property type="match status" value="1"/>
</dbReference>
<dbReference type="Gene3D" id="1.10.287.1480">
    <property type="match status" value="1"/>
</dbReference>
<dbReference type="HAMAP" id="MF_00537">
    <property type="entry name" value="Ribosomal_uS14_1"/>
    <property type="match status" value="1"/>
</dbReference>
<dbReference type="InterPro" id="IPR001209">
    <property type="entry name" value="Ribosomal_uS14"/>
</dbReference>
<dbReference type="InterPro" id="IPR023036">
    <property type="entry name" value="Ribosomal_uS14_bac/plastid"/>
</dbReference>
<dbReference type="NCBIfam" id="NF006477">
    <property type="entry name" value="PRK08881.1"/>
    <property type="match status" value="1"/>
</dbReference>
<dbReference type="PANTHER" id="PTHR19836">
    <property type="entry name" value="30S RIBOSOMAL PROTEIN S14"/>
    <property type="match status" value="1"/>
</dbReference>
<dbReference type="PANTHER" id="PTHR19836:SF19">
    <property type="entry name" value="SMALL RIBOSOMAL SUBUNIT PROTEIN US14M"/>
    <property type="match status" value="1"/>
</dbReference>
<dbReference type="Pfam" id="PF00253">
    <property type="entry name" value="Ribosomal_S14"/>
    <property type="match status" value="1"/>
</dbReference>
<dbReference type="SUPFAM" id="SSF57716">
    <property type="entry name" value="Glucocorticoid receptor-like (DNA-binding domain)"/>
    <property type="match status" value="1"/>
</dbReference>
<protein>
    <recommendedName>
        <fullName evidence="1">Small ribosomal subunit protein uS14</fullName>
    </recommendedName>
    <alternativeName>
        <fullName evidence="2">30S ribosomal protein S14</fullName>
    </alternativeName>
</protein>
<feature type="chain" id="PRO_1000128341" description="Small ribosomal subunit protein uS14">
    <location>
        <begin position="1"/>
        <end position="101"/>
    </location>
</feature>
<proteinExistence type="inferred from homology"/>
<sequence>MAKLALIEREKKRARLAAKYAPKRAELKAIIGDMSKSDEEHYAARLELQQLPRNSNPTRKRNRCAITGRPRGTFRKFGLARNKIREIAFRGEIPGLTKASW</sequence>
<keyword id="KW-0687">Ribonucleoprotein</keyword>
<keyword id="KW-0689">Ribosomal protein</keyword>
<keyword id="KW-0694">RNA-binding</keyword>
<keyword id="KW-0699">rRNA-binding</keyword>
<reference key="1">
    <citation type="journal article" date="2011" name="J. Bacteriol.">
        <title>Complete genome sequence of the plant growth-promoting endophyte Burkholderia phytofirmans strain PsJN.</title>
        <authorList>
            <person name="Weilharter A."/>
            <person name="Mitter B."/>
            <person name="Shin M.V."/>
            <person name="Chain P.S."/>
            <person name="Nowak J."/>
            <person name="Sessitsch A."/>
        </authorList>
    </citation>
    <scope>NUCLEOTIDE SEQUENCE [LARGE SCALE GENOMIC DNA]</scope>
    <source>
        <strain>DSM 17436 / LMG 22146 / PsJN</strain>
    </source>
</reference>
<organism>
    <name type="scientific">Paraburkholderia phytofirmans (strain DSM 17436 / LMG 22146 / PsJN)</name>
    <name type="common">Burkholderia phytofirmans</name>
    <dbReference type="NCBI Taxonomy" id="398527"/>
    <lineage>
        <taxon>Bacteria</taxon>
        <taxon>Pseudomonadati</taxon>
        <taxon>Pseudomonadota</taxon>
        <taxon>Betaproteobacteria</taxon>
        <taxon>Burkholderiales</taxon>
        <taxon>Burkholderiaceae</taxon>
        <taxon>Paraburkholderia</taxon>
    </lineage>
</organism>
<gene>
    <name evidence="1" type="primary">rpsN</name>
    <name type="ordered locus">Bphyt_3631</name>
</gene>
<comment type="function">
    <text evidence="1">Binds 16S rRNA, required for the assembly of 30S particles and may also be responsible for determining the conformation of the 16S rRNA at the A site.</text>
</comment>
<comment type="subunit">
    <text evidence="1">Part of the 30S ribosomal subunit. Contacts proteins S3 and S10.</text>
</comment>
<comment type="similarity">
    <text evidence="1">Belongs to the universal ribosomal protein uS14 family.</text>
</comment>
<name>RS14_PARPJ</name>